<reference key="1">
    <citation type="submission" date="2008-05" db="EMBL/GenBank/DDBJ databases">
        <title>Genome sequence of Clostridium botulinum Ba4 strain 657.</title>
        <authorList>
            <person name="Shrivastava S."/>
            <person name="Brown J.L."/>
            <person name="Bruce D."/>
            <person name="Detter C."/>
            <person name="Munk C."/>
            <person name="Smith L.A."/>
            <person name="Smith T.J."/>
            <person name="Sutton G."/>
            <person name="Brettin T.S."/>
        </authorList>
    </citation>
    <scope>NUCLEOTIDE SEQUENCE [LARGE SCALE GENOMIC DNA]</scope>
    <source>
        <strain>657 / Type Ba4</strain>
    </source>
</reference>
<sequence>MSMFCYQCQEAAGGRGCTVKGVCGKTEDIAKTQDLIIYVVKGIAIYSSQAREMGLNTSEADKFIVESLFSTITNANFDAKALNSRVQKGLKIRQSLKDDIIKAGGSYNSKENKSWTSKFLSVLGIKNDKDEKEIHDAAIWAANNPEDFKKKAETVGVLATENEDIRSLRELLTYGLKGMAAYLEHANNLGYAEDSIHAFMEKALVATLDDTLSADELTALVLECGKYGVDVMALLDKANTSTYGNPEITKVNIGVRNNPGILISGHDLKDMEELLKQTEGTGVDVYTHSEMLPANYYPAFKKYKHFVGNYGNAWWKQNEEFEAFNGPILMTTNCIVTPKASYKDRMYTTGVTGFEGVKHINPSKDGKKDFSEIIEHAKRCASPKEIEKGEIIGGFAHNQVLALAPQVVDAVKTGAIKRFFVMAGCDGRMKSRNYYTDFAKALPKDTVILTAGCAKYKYNKLDLGDINGIPRVLDAGQCNDSYSLAVIALKLKEVFELEDINELPISYNIAWYEQKAVIVLLALLHLGVKNIHLGPTLPAFLSPNVAKILVENFGIGTISSVDEDIKMFMN</sequence>
<gene>
    <name evidence="1" type="primary">hcp</name>
    <name type="ordered locus">CLJ_B3019</name>
</gene>
<dbReference type="EC" id="1.7.99.1" evidence="1"/>
<dbReference type="EMBL" id="CP001083">
    <property type="protein sequence ID" value="ACQ52520.1"/>
    <property type="molecule type" value="Genomic_DNA"/>
</dbReference>
<dbReference type="RefSeq" id="WP_003361247.1">
    <property type="nucleotide sequence ID" value="NC_012658.1"/>
</dbReference>
<dbReference type="SMR" id="C3L261"/>
<dbReference type="KEGG" id="cbi:CLJ_B3019"/>
<dbReference type="HOGENOM" id="CLU_038344_2_0_9"/>
<dbReference type="Proteomes" id="UP000002333">
    <property type="component" value="Chromosome"/>
</dbReference>
<dbReference type="GO" id="GO:0005737">
    <property type="term" value="C:cytoplasm"/>
    <property type="evidence" value="ECO:0007669"/>
    <property type="project" value="UniProtKB-SubCell"/>
</dbReference>
<dbReference type="GO" id="GO:0051539">
    <property type="term" value="F:4 iron, 4 sulfur cluster binding"/>
    <property type="evidence" value="ECO:0007669"/>
    <property type="project" value="UniProtKB-KW"/>
</dbReference>
<dbReference type="GO" id="GO:0050418">
    <property type="term" value="F:hydroxylamine reductase activity"/>
    <property type="evidence" value="ECO:0007669"/>
    <property type="project" value="UniProtKB-UniRule"/>
</dbReference>
<dbReference type="GO" id="GO:0046872">
    <property type="term" value="F:metal ion binding"/>
    <property type="evidence" value="ECO:0007669"/>
    <property type="project" value="UniProtKB-KW"/>
</dbReference>
<dbReference type="GO" id="GO:0004601">
    <property type="term" value="F:peroxidase activity"/>
    <property type="evidence" value="ECO:0007669"/>
    <property type="project" value="TreeGrafter"/>
</dbReference>
<dbReference type="GO" id="GO:0042542">
    <property type="term" value="P:response to hydrogen peroxide"/>
    <property type="evidence" value="ECO:0007669"/>
    <property type="project" value="TreeGrafter"/>
</dbReference>
<dbReference type="CDD" id="cd01914">
    <property type="entry name" value="HCP"/>
    <property type="match status" value="1"/>
</dbReference>
<dbReference type="FunFam" id="1.20.1270.20:FF:000001">
    <property type="entry name" value="Hydroxylamine reductase"/>
    <property type="match status" value="1"/>
</dbReference>
<dbReference type="FunFam" id="1.20.1270.20:FF:000003">
    <property type="entry name" value="Hydroxylamine reductase"/>
    <property type="match status" value="1"/>
</dbReference>
<dbReference type="FunFam" id="3.40.50.2030:FF:000001">
    <property type="entry name" value="Hydroxylamine reductase"/>
    <property type="match status" value="1"/>
</dbReference>
<dbReference type="FunFam" id="3.40.50.2030:FF:000002">
    <property type="entry name" value="Hydroxylamine reductase"/>
    <property type="match status" value="1"/>
</dbReference>
<dbReference type="Gene3D" id="1.20.1270.20">
    <property type="match status" value="2"/>
</dbReference>
<dbReference type="Gene3D" id="3.40.50.2030">
    <property type="match status" value="2"/>
</dbReference>
<dbReference type="HAMAP" id="MF_00069">
    <property type="entry name" value="Hydroxylam_reduct"/>
    <property type="match status" value="1"/>
</dbReference>
<dbReference type="InterPro" id="IPR004137">
    <property type="entry name" value="HCP/CODH"/>
</dbReference>
<dbReference type="InterPro" id="IPR010048">
    <property type="entry name" value="Hydroxylam_reduct"/>
</dbReference>
<dbReference type="InterPro" id="IPR016099">
    <property type="entry name" value="Prismane-like_a/b-sand"/>
</dbReference>
<dbReference type="InterPro" id="IPR011254">
    <property type="entry name" value="Prismane-like_sf"/>
</dbReference>
<dbReference type="InterPro" id="IPR016100">
    <property type="entry name" value="Prismane_a-bundle"/>
</dbReference>
<dbReference type="NCBIfam" id="TIGR01703">
    <property type="entry name" value="hybrid_clust"/>
    <property type="match status" value="1"/>
</dbReference>
<dbReference type="NCBIfam" id="NF003658">
    <property type="entry name" value="PRK05290.1"/>
    <property type="match status" value="1"/>
</dbReference>
<dbReference type="PANTHER" id="PTHR30109">
    <property type="entry name" value="HYDROXYLAMINE REDUCTASE"/>
    <property type="match status" value="1"/>
</dbReference>
<dbReference type="PANTHER" id="PTHR30109:SF0">
    <property type="entry name" value="HYDROXYLAMINE REDUCTASE"/>
    <property type="match status" value="1"/>
</dbReference>
<dbReference type="Pfam" id="PF03063">
    <property type="entry name" value="Prismane"/>
    <property type="match status" value="1"/>
</dbReference>
<dbReference type="PIRSF" id="PIRSF000076">
    <property type="entry name" value="HCP"/>
    <property type="match status" value="1"/>
</dbReference>
<dbReference type="SUPFAM" id="SSF56821">
    <property type="entry name" value="Prismane protein-like"/>
    <property type="match status" value="1"/>
</dbReference>
<feature type="chain" id="PRO_1000202433" description="Hydroxylamine reductase">
    <location>
        <begin position="1"/>
        <end position="570"/>
    </location>
</feature>
<feature type="binding site" evidence="1">
    <location>
        <position position="5"/>
    </location>
    <ligand>
        <name>[4Fe-4S] cluster</name>
        <dbReference type="ChEBI" id="CHEBI:49883"/>
    </ligand>
</feature>
<feature type="binding site" evidence="1">
    <location>
        <position position="8"/>
    </location>
    <ligand>
        <name>[4Fe-4S] cluster</name>
        <dbReference type="ChEBI" id="CHEBI:49883"/>
    </ligand>
</feature>
<feature type="binding site" evidence="1">
    <location>
        <position position="17"/>
    </location>
    <ligand>
        <name>[4Fe-4S] cluster</name>
        <dbReference type="ChEBI" id="CHEBI:49883"/>
    </ligand>
</feature>
<feature type="binding site" evidence="1">
    <location>
        <position position="23"/>
    </location>
    <ligand>
        <name>[4Fe-4S] cluster</name>
        <dbReference type="ChEBI" id="CHEBI:49883"/>
    </ligand>
</feature>
<feature type="binding site" evidence="1">
    <location>
        <position position="266"/>
    </location>
    <ligand>
        <name>hybrid [4Fe-2O-2S] cluster</name>
        <dbReference type="ChEBI" id="CHEBI:60519"/>
    </ligand>
</feature>
<feature type="binding site" evidence="1">
    <location>
        <position position="290"/>
    </location>
    <ligand>
        <name>hybrid [4Fe-2O-2S] cluster</name>
        <dbReference type="ChEBI" id="CHEBI:60519"/>
    </ligand>
</feature>
<feature type="binding site" evidence="1">
    <location>
        <position position="334"/>
    </location>
    <ligand>
        <name>hybrid [4Fe-2O-2S] cluster</name>
        <dbReference type="ChEBI" id="CHEBI:60519"/>
    </ligand>
</feature>
<feature type="binding site" description="via persulfide group" evidence="1">
    <location>
        <position position="425"/>
    </location>
    <ligand>
        <name>hybrid [4Fe-2O-2S] cluster</name>
        <dbReference type="ChEBI" id="CHEBI:60519"/>
    </ligand>
</feature>
<feature type="binding site" evidence="1">
    <location>
        <position position="453"/>
    </location>
    <ligand>
        <name>hybrid [4Fe-2O-2S] cluster</name>
        <dbReference type="ChEBI" id="CHEBI:60519"/>
    </ligand>
</feature>
<feature type="binding site" evidence="1">
    <location>
        <position position="478"/>
    </location>
    <ligand>
        <name>hybrid [4Fe-2O-2S] cluster</name>
        <dbReference type="ChEBI" id="CHEBI:60519"/>
    </ligand>
</feature>
<feature type="binding site" evidence="1">
    <location>
        <position position="513"/>
    </location>
    <ligand>
        <name>hybrid [4Fe-2O-2S] cluster</name>
        <dbReference type="ChEBI" id="CHEBI:60519"/>
    </ligand>
</feature>
<feature type="binding site" evidence="1">
    <location>
        <position position="515"/>
    </location>
    <ligand>
        <name>hybrid [4Fe-2O-2S] cluster</name>
        <dbReference type="ChEBI" id="CHEBI:60519"/>
    </ligand>
</feature>
<feature type="modified residue" description="Cysteine persulfide" evidence="1">
    <location>
        <position position="425"/>
    </location>
</feature>
<organism>
    <name type="scientific">Clostridium botulinum (strain 657 / Type Ba4)</name>
    <dbReference type="NCBI Taxonomy" id="515621"/>
    <lineage>
        <taxon>Bacteria</taxon>
        <taxon>Bacillati</taxon>
        <taxon>Bacillota</taxon>
        <taxon>Clostridia</taxon>
        <taxon>Eubacteriales</taxon>
        <taxon>Clostridiaceae</taxon>
        <taxon>Clostridium</taxon>
    </lineage>
</organism>
<protein>
    <recommendedName>
        <fullName evidence="1">Hydroxylamine reductase</fullName>
        <ecNumber evidence="1">1.7.99.1</ecNumber>
    </recommendedName>
    <alternativeName>
        <fullName evidence="1">Hybrid-cluster protein</fullName>
        <shortName evidence="1">HCP</shortName>
    </alternativeName>
    <alternativeName>
        <fullName evidence="1">Prismane protein</fullName>
    </alternativeName>
</protein>
<accession>C3L261</accession>
<name>HCP_CLOB6</name>
<proteinExistence type="inferred from homology"/>
<evidence type="ECO:0000255" key="1">
    <source>
        <dbReference type="HAMAP-Rule" id="MF_00069"/>
    </source>
</evidence>
<comment type="function">
    <text evidence="1">Catalyzes the reduction of hydroxylamine to form NH(3) and H(2)O.</text>
</comment>
<comment type="catalytic activity">
    <reaction evidence="1">
        <text>A + NH4(+) + H2O = hydroxylamine + AH2 + H(+)</text>
        <dbReference type="Rhea" id="RHEA:22052"/>
        <dbReference type="ChEBI" id="CHEBI:13193"/>
        <dbReference type="ChEBI" id="CHEBI:15377"/>
        <dbReference type="ChEBI" id="CHEBI:15378"/>
        <dbReference type="ChEBI" id="CHEBI:15429"/>
        <dbReference type="ChEBI" id="CHEBI:17499"/>
        <dbReference type="ChEBI" id="CHEBI:28938"/>
        <dbReference type="EC" id="1.7.99.1"/>
    </reaction>
</comment>
<comment type="cofactor">
    <cofactor evidence="1">
        <name>[4Fe-4S] cluster</name>
        <dbReference type="ChEBI" id="CHEBI:49883"/>
    </cofactor>
    <text evidence="1">Binds 1 [4Fe-4S] cluster.</text>
</comment>
<comment type="cofactor">
    <cofactor evidence="1">
        <name>hybrid [4Fe-2O-2S] cluster</name>
        <dbReference type="ChEBI" id="CHEBI:60519"/>
    </cofactor>
    <text evidence="1">Binds 1 hybrid [4Fe-2O-2S] cluster.</text>
</comment>
<comment type="subcellular location">
    <subcellularLocation>
        <location evidence="1">Cytoplasm</location>
    </subcellularLocation>
</comment>
<comment type="similarity">
    <text evidence="1">Belongs to the HCP family.</text>
</comment>
<keyword id="KW-0004">4Fe-4S</keyword>
<keyword id="KW-0963">Cytoplasm</keyword>
<keyword id="KW-0408">Iron</keyword>
<keyword id="KW-0411">Iron-sulfur</keyword>
<keyword id="KW-0479">Metal-binding</keyword>
<keyword id="KW-0560">Oxidoreductase</keyword>